<feature type="chain" id="PRO_1000085572" description="Deoxyguanosinetriphosphate triphosphohydrolase-like protein">
    <location>
        <begin position="1"/>
        <end position="384"/>
    </location>
</feature>
<feature type="domain" description="HD" evidence="2">
    <location>
        <begin position="62"/>
        <end position="198"/>
    </location>
</feature>
<reference key="1">
    <citation type="journal article" date="2008" name="Infect. Immun.">
        <title>Genomic comparison of virulent Rickettsia rickettsii Sheila Smith and avirulent Rickettsia rickettsii Iowa.</title>
        <authorList>
            <person name="Ellison D.W."/>
            <person name="Clark T.R."/>
            <person name="Sturdevant D.E."/>
            <person name="Virtaneva K."/>
            <person name="Porcella S.F."/>
            <person name="Hackstadt T."/>
        </authorList>
    </citation>
    <scope>NUCLEOTIDE SEQUENCE [LARGE SCALE GENOMIC DNA]</scope>
    <source>
        <strain>Iowa</strain>
    </source>
</reference>
<sequence length="384" mass="44284">MLASYASDPLKSRGRLYKEIPTSYRNEFERDRDRIIHTNAFRRLQYKTQVFINHEGDHYRNRLTHSLEVSTVARSVASTLNLSNDLAETIALAHDLGHTPFGHAGERALNECMREYNGFSHNAQSLKILTLLEKRYAAYNGVNLTWEVLEGIVKHNGPILGEINEYIAEYNKQNDLELSTYASAEAQIAALADDISYISHDLEDSIGAKIIDFNSLAELKYIDQHVVELKSKFKNISSSCLIYEVVRKLIHELITDLLWQTKENLNKEKITNIDEIRNLNYQIVDFTEKTNKNIKETKKFLHERVYKSNKITAISLKCTKIVQGLFKVYMDDINLLPVNWKMLIDSNETYSKARVIADYIAGMTDRFAIQEYNQLCSTSYITCF</sequence>
<comment type="similarity">
    <text evidence="1">Belongs to the dGTPase family. Type 2 subfamily.</text>
</comment>
<dbReference type="EMBL" id="CP000766">
    <property type="protein sequence ID" value="ABY72042.1"/>
    <property type="molecule type" value="Genomic_DNA"/>
</dbReference>
<dbReference type="RefSeq" id="WP_012150319.1">
    <property type="nucleotide sequence ID" value="NC_010263.3"/>
</dbReference>
<dbReference type="SMR" id="B0BW16"/>
<dbReference type="KEGG" id="rrj:RrIowa_0122"/>
<dbReference type="eggNOG" id="COG0232">
    <property type="taxonomic scope" value="Bacteria"/>
</dbReference>
<dbReference type="HOGENOM" id="CLU_028163_1_0_5"/>
<dbReference type="Proteomes" id="UP000000796">
    <property type="component" value="Chromosome"/>
</dbReference>
<dbReference type="GO" id="GO:0008832">
    <property type="term" value="F:dGTPase activity"/>
    <property type="evidence" value="ECO:0007669"/>
    <property type="project" value="TreeGrafter"/>
</dbReference>
<dbReference type="GO" id="GO:0006203">
    <property type="term" value="P:dGTP catabolic process"/>
    <property type="evidence" value="ECO:0007669"/>
    <property type="project" value="TreeGrafter"/>
</dbReference>
<dbReference type="CDD" id="cd00077">
    <property type="entry name" value="HDc"/>
    <property type="match status" value="1"/>
</dbReference>
<dbReference type="Gene3D" id="1.10.3210.10">
    <property type="entry name" value="Hypothetical protein af1432"/>
    <property type="match status" value="1"/>
</dbReference>
<dbReference type="HAMAP" id="MF_01212">
    <property type="entry name" value="dGTPase_type2"/>
    <property type="match status" value="1"/>
</dbReference>
<dbReference type="InterPro" id="IPR006261">
    <property type="entry name" value="dGTPase"/>
</dbReference>
<dbReference type="InterPro" id="IPR050135">
    <property type="entry name" value="dGTPase-like"/>
</dbReference>
<dbReference type="InterPro" id="IPR023023">
    <property type="entry name" value="dNTPase_2"/>
</dbReference>
<dbReference type="InterPro" id="IPR003607">
    <property type="entry name" value="HD/PDEase_dom"/>
</dbReference>
<dbReference type="InterPro" id="IPR006674">
    <property type="entry name" value="HD_domain"/>
</dbReference>
<dbReference type="InterPro" id="IPR026875">
    <property type="entry name" value="PHydrolase_assoc_dom"/>
</dbReference>
<dbReference type="NCBIfam" id="TIGR01353">
    <property type="entry name" value="dGTP_triPase"/>
    <property type="match status" value="1"/>
</dbReference>
<dbReference type="NCBIfam" id="NF002326">
    <property type="entry name" value="PRK01286.1-1"/>
    <property type="match status" value="1"/>
</dbReference>
<dbReference type="NCBIfam" id="NF002330">
    <property type="entry name" value="PRK01286.1-5"/>
    <property type="match status" value="1"/>
</dbReference>
<dbReference type="PANTHER" id="PTHR11373:SF43">
    <property type="entry name" value="DEOXYGUANOSINETRIPHOSPHATE TRIPHOSPHOHYDROLASE-LIKE PROTEIN"/>
    <property type="match status" value="1"/>
</dbReference>
<dbReference type="PANTHER" id="PTHR11373">
    <property type="entry name" value="DEOXYNUCLEOSIDE TRIPHOSPHATE TRIPHOSPHOHYDROLASE"/>
    <property type="match status" value="1"/>
</dbReference>
<dbReference type="Pfam" id="PF01966">
    <property type="entry name" value="HD"/>
    <property type="match status" value="1"/>
</dbReference>
<dbReference type="Pfam" id="PF13286">
    <property type="entry name" value="HD_assoc"/>
    <property type="match status" value="1"/>
</dbReference>
<dbReference type="SMART" id="SM00471">
    <property type="entry name" value="HDc"/>
    <property type="match status" value="1"/>
</dbReference>
<dbReference type="SUPFAM" id="SSF109604">
    <property type="entry name" value="HD-domain/PDEase-like"/>
    <property type="match status" value="1"/>
</dbReference>
<dbReference type="PROSITE" id="PS51831">
    <property type="entry name" value="HD"/>
    <property type="match status" value="1"/>
</dbReference>
<protein>
    <recommendedName>
        <fullName evidence="1">Deoxyguanosinetriphosphate triphosphohydrolase-like protein</fullName>
    </recommendedName>
</protein>
<accession>B0BW16</accession>
<gene>
    <name type="ordered locus">RrIowa_0122</name>
</gene>
<keyword id="KW-0378">Hydrolase</keyword>
<proteinExistence type="inferred from homology"/>
<organism>
    <name type="scientific">Rickettsia rickettsii (strain Iowa)</name>
    <dbReference type="NCBI Taxonomy" id="452659"/>
    <lineage>
        <taxon>Bacteria</taxon>
        <taxon>Pseudomonadati</taxon>
        <taxon>Pseudomonadota</taxon>
        <taxon>Alphaproteobacteria</taxon>
        <taxon>Rickettsiales</taxon>
        <taxon>Rickettsiaceae</taxon>
        <taxon>Rickettsieae</taxon>
        <taxon>Rickettsia</taxon>
        <taxon>spotted fever group</taxon>
    </lineage>
</organism>
<name>DGTL1_RICRO</name>
<evidence type="ECO:0000255" key="1">
    <source>
        <dbReference type="HAMAP-Rule" id="MF_01212"/>
    </source>
</evidence>
<evidence type="ECO:0000255" key="2">
    <source>
        <dbReference type="PROSITE-ProRule" id="PRU01175"/>
    </source>
</evidence>